<name>RL15_ECOL6</name>
<comment type="function">
    <text evidence="1">Binds to the 23S rRNA.</text>
</comment>
<comment type="subunit">
    <text evidence="1">Part of the 50S ribosomal subunit.</text>
</comment>
<comment type="similarity">
    <text evidence="1">Belongs to the universal ribosomal protein uL15 family.</text>
</comment>
<gene>
    <name evidence="1" type="primary">rplO</name>
    <name type="ordered locus">c4062</name>
</gene>
<accession>P66071</accession>
<accession>Q8XFN6</accession>
<keyword id="KW-1185">Reference proteome</keyword>
<keyword id="KW-0687">Ribonucleoprotein</keyword>
<keyword id="KW-0689">Ribosomal protein</keyword>
<keyword id="KW-0694">RNA-binding</keyword>
<keyword id="KW-0699">rRNA-binding</keyword>
<protein>
    <recommendedName>
        <fullName evidence="1">Large ribosomal subunit protein uL15</fullName>
    </recommendedName>
    <alternativeName>
        <fullName evidence="3">50S ribosomal protein L15</fullName>
    </alternativeName>
</protein>
<sequence length="144" mass="14966">MRLNTLSPAEGSKKAGKRLGRGIGSGLGKTGGRGHKGQKSRSGGGVRRGFEGGQMPLYRRLPKFGFTSRKAAITAEVRLSDLAKVEGGVVDLNTLKAANIIGIQIEFAKVILAGEVTTPVTVRGLRVTKGARAAIEAAGGKIEE</sequence>
<proteinExistence type="inferred from homology"/>
<dbReference type="EMBL" id="AE014075">
    <property type="protein sequence ID" value="AAN82500.1"/>
    <property type="molecule type" value="Genomic_DNA"/>
</dbReference>
<dbReference type="RefSeq" id="WP_001238917.1">
    <property type="nucleotide sequence ID" value="NZ_CP051263.1"/>
</dbReference>
<dbReference type="SMR" id="P66071"/>
<dbReference type="STRING" id="199310.c4062"/>
<dbReference type="GeneID" id="93778686"/>
<dbReference type="KEGG" id="ecc:c4062"/>
<dbReference type="eggNOG" id="COG0200">
    <property type="taxonomic scope" value="Bacteria"/>
</dbReference>
<dbReference type="HOGENOM" id="CLU_055188_4_2_6"/>
<dbReference type="BioCyc" id="ECOL199310:C4062-MONOMER"/>
<dbReference type="Proteomes" id="UP000001410">
    <property type="component" value="Chromosome"/>
</dbReference>
<dbReference type="GO" id="GO:0022625">
    <property type="term" value="C:cytosolic large ribosomal subunit"/>
    <property type="evidence" value="ECO:0007669"/>
    <property type="project" value="TreeGrafter"/>
</dbReference>
<dbReference type="GO" id="GO:0019843">
    <property type="term" value="F:rRNA binding"/>
    <property type="evidence" value="ECO:0007669"/>
    <property type="project" value="UniProtKB-UniRule"/>
</dbReference>
<dbReference type="GO" id="GO:0003735">
    <property type="term" value="F:structural constituent of ribosome"/>
    <property type="evidence" value="ECO:0007669"/>
    <property type="project" value="InterPro"/>
</dbReference>
<dbReference type="GO" id="GO:0006412">
    <property type="term" value="P:translation"/>
    <property type="evidence" value="ECO:0007669"/>
    <property type="project" value="UniProtKB-UniRule"/>
</dbReference>
<dbReference type="FunFam" id="3.100.10.10:FF:000003">
    <property type="entry name" value="50S ribosomal protein L15"/>
    <property type="match status" value="1"/>
</dbReference>
<dbReference type="Gene3D" id="3.100.10.10">
    <property type="match status" value="1"/>
</dbReference>
<dbReference type="HAMAP" id="MF_01341">
    <property type="entry name" value="Ribosomal_uL15"/>
    <property type="match status" value="1"/>
</dbReference>
<dbReference type="InterPro" id="IPR030878">
    <property type="entry name" value="Ribosomal_uL15"/>
</dbReference>
<dbReference type="InterPro" id="IPR021131">
    <property type="entry name" value="Ribosomal_uL15/eL18"/>
</dbReference>
<dbReference type="InterPro" id="IPR036227">
    <property type="entry name" value="Ribosomal_uL15/eL18_sf"/>
</dbReference>
<dbReference type="InterPro" id="IPR005749">
    <property type="entry name" value="Ribosomal_uL15_bac-type"/>
</dbReference>
<dbReference type="InterPro" id="IPR001196">
    <property type="entry name" value="Ribosomal_uL15_CS"/>
</dbReference>
<dbReference type="NCBIfam" id="TIGR01071">
    <property type="entry name" value="rplO_bact"/>
    <property type="match status" value="1"/>
</dbReference>
<dbReference type="PANTHER" id="PTHR12934">
    <property type="entry name" value="50S RIBOSOMAL PROTEIN L15"/>
    <property type="match status" value="1"/>
</dbReference>
<dbReference type="PANTHER" id="PTHR12934:SF11">
    <property type="entry name" value="LARGE RIBOSOMAL SUBUNIT PROTEIN UL15M"/>
    <property type="match status" value="1"/>
</dbReference>
<dbReference type="Pfam" id="PF00828">
    <property type="entry name" value="Ribosomal_L27A"/>
    <property type="match status" value="1"/>
</dbReference>
<dbReference type="SUPFAM" id="SSF52080">
    <property type="entry name" value="Ribosomal proteins L15p and L18e"/>
    <property type="match status" value="1"/>
</dbReference>
<dbReference type="PROSITE" id="PS00475">
    <property type="entry name" value="RIBOSOMAL_L15"/>
    <property type="match status" value="1"/>
</dbReference>
<organism>
    <name type="scientific">Escherichia coli O6:H1 (strain CFT073 / ATCC 700928 / UPEC)</name>
    <dbReference type="NCBI Taxonomy" id="199310"/>
    <lineage>
        <taxon>Bacteria</taxon>
        <taxon>Pseudomonadati</taxon>
        <taxon>Pseudomonadota</taxon>
        <taxon>Gammaproteobacteria</taxon>
        <taxon>Enterobacterales</taxon>
        <taxon>Enterobacteriaceae</taxon>
        <taxon>Escherichia</taxon>
    </lineage>
</organism>
<feature type="chain" id="PRO_0000104723" description="Large ribosomal subunit protein uL15">
    <location>
        <begin position="1"/>
        <end position="144"/>
    </location>
</feature>
<feature type="region of interest" description="Disordered" evidence="2">
    <location>
        <begin position="1"/>
        <end position="54"/>
    </location>
</feature>
<feature type="compositionally biased region" description="Gly residues" evidence="2">
    <location>
        <begin position="21"/>
        <end position="31"/>
    </location>
</feature>
<reference key="1">
    <citation type="journal article" date="2002" name="Proc. Natl. Acad. Sci. U.S.A.">
        <title>Extensive mosaic structure revealed by the complete genome sequence of uropathogenic Escherichia coli.</title>
        <authorList>
            <person name="Welch R.A."/>
            <person name="Burland V."/>
            <person name="Plunkett G. III"/>
            <person name="Redford P."/>
            <person name="Roesch P."/>
            <person name="Rasko D."/>
            <person name="Buckles E.L."/>
            <person name="Liou S.-R."/>
            <person name="Boutin A."/>
            <person name="Hackett J."/>
            <person name="Stroud D."/>
            <person name="Mayhew G.F."/>
            <person name="Rose D.J."/>
            <person name="Zhou S."/>
            <person name="Schwartz D.C."/>
            <person name="Perna N.T."/>
            <person name="Mobley H.L.T."/>
            <person name="Donnenberg M.S."/>
            <person name="Blattner F.R."/>
        </authorList>
    </citation>
    <scope>NUCLEOTIDE SEQUENCE [LARGE SCALE GENOMIC DNA]</scope>
    <source>
        <strain>CFT073 / ATCC 700928 / UPEC</strain>
    </source>
</reference>
<evidence type="ECO:0000255" key="1">
    <source>
        <dbReference type="HAMAP-Rule" id="MF_01341"/>
    </source>
</evidence>
<evidence type="ECO:0000256" key="2">
    <source>
        <dbReference type="SAM" id="MobiDB-lite"/>
    </source>
</evidence>
<evidence type="ECO:0000305" key="3"/>